<comment type="function">
    <text evidence="1">This protein binds to the 23S rRNA, and is important in its secondary structure. It is located near the subunit interface in the base of the L7/L12 stalk, and near the tRNA binding site of the peptidyltransferase center.</text>
</comment>
<comment type="subunit">
    <text evidence="1">Part of the 50S ribosomal subunit.</text>
</comment>
<comment type="similarity">
    <text evidence="1">Belongs to the universal ribosomal protein uL6 family.</text>
</comment>
<sequence length="180" mass="19918">MSRIGRLPIKIPDTVKIDVKGNLVIVEGTRGKLVQDIKDSINVKVENGSVIVNRAFNDKKTKAYHGLYRSLIFNMVKGVTEGFSKSLTINGIGYRVEQQGNSLFLNLGYSTQFEYVVPDGVSVKLDGNTKISVEGIDKFKVGQVAAEIRSLKKPEPYKGKGIKYDNEVIRRKVGKSGVKK</sequence>
<proteinExistence type="inferred from homology"/>
<evidence type="ECO:0000255" key="1">
    <source>
        <dbReference type="HAMAP-Rule" id="MF_01365"/>
    </source>
</evidence>
<evidence type="ECO:0000305" key="2"/>
<reference key="1">
    <citation type="journal article" date="2004" name="Nucleic Acids Res.">
        <title>Comparative analysis of the Borrelia garinii genome.</title>
        <authorList>
            <person name="Gloeckner G."/>
            <person name="Lehmann R."/>
            <person name="Romualdi A."/>
            <person name="Pradella S."/>
            <person name="Schulte-Spechtel U."/>
            <person name="Schilhabel M."/>
            <person name="Wilske B."/>
            <person name="Suehnel J."/>
            <person name="Platzer M."/>
        </authorList>
    </citation>
    <scope>NUCLEOTIDE SEQUENCE [LARGE SCALE GENOMIC DNA]</scope>
    <source>
        <strain>ATCC BAA-2496 / DSM 23469 / PBi</strain>
    </source>
</reference>
<keyword id="KW-0687">Ribonucleoprotein</keyword>
<keyword id="KW-0689">Ribosomal protein</keyword>
<keyword id="KW-0694">RNA-binding</keyword>
<keyword id="KW-0699">rRNA-binding</keyword>
<name>RL6_BORGP</name>
<organism>
    <name type="scientific">Borrelia garinii subsp. bavariensis (strain ATCC BAA-2496 / DSM 23469 / PBi)</name>
    <name type="common">Borreliella bavariensis</name>
    <dbReference type="NCBI Taxonomy" id="290434"/>
    <lineage>
        <taxon>Bacteria</taxon>
        <taxon>Pseudomonadati</taxon>
        <taxon>Spirochaetota</taxon>
        <taxon>Spirochaetia</taxon>
        <taxon>Spirochaetales</taxon>
        <taxon>Borreliaceae</taxon>
        <taxon>Borreliella</taxon>
    </lineage>
</organism>
<dbReference type="EMBL" id="CP000013">
    <property type="protein sequence ID" value="AAU07344.1"/>
    <property type="molecule type" value="Genomic_DNA"/>
</dbReference>
<dbReference type="RefSeq" id="WP_011193811.1">
    <property type="nucleotide sequence ID" value="NZ_CP028872.1"/>
</dbReference>
<dbReference type="SMR" id="Q661C7"/>
<dbReference type="GeneID" id="45161287"/>
<dbReference type="KEGG" id="bga:BG0505"/>
<dbReference type="eggNOG" id="COG0097">
    <property type="taxonomic scope" value="Bacteria"/>
</dbReference>
<dbReference type="HOGENOM" id="CLU_065464_1_2_12"/>
<dbReference type="OrthoDB" id="9805007at2"/>
<dbReference type="Proteomes" id="UP000002276">
    <property type="component" value="Chromosome"/>
</dbReference>
<dbReference type="GO" id="GO:0022625">
    <property type="term" value="C:cytosolic large ribosomal subunit"/>
    <property type="evidence" value="ECO:0007669"/>
    <property type="project" value="TreeGrafter"/>
</dbReference>
<dbReference type="GO" id="GO:0019843">
    <property type="term" value="F:rRNA binding"/>
    <property type="evidence" value="ECO:0007669"/>
    <property type="project" value="UniProtKB-UniRule"/>
</dbReference>
<dbReference type="GO" id="GO:0003735">
    <property type="term" value="F:structural constituent of ribosome"/>
    <property type="evidence" value="ECO:0007669"/>
    <property type="project" value="InterPro"/>
</dbReference>
<dbReference type="GO" id="GO:0002181">
    <property type="term" value="P:cytoplasmic translation"/>
    <property type="evidence" value="ECO:0007669"/>
    <property type="project" value="TreeGrafter"/>
</dbReference>
<dbReference type="FunFam" id="3.90.930.12:FF:000001">
    <property type="entry name" value="50S ribosomal protein L6"/>
    <property type="match status" value="1"/>
</dbReference>
<dbReference type="FunFam" id="3.90.930.12:FF:000002">
    <property type="entry name" value="50S ribosomal protein L6"/>
    <property type="match status" value="1"/>
</dbReference>
<dbReference type="Gene3D" id="3.90.930.12">
    <property type="entry name" value="Ribosomal protein L6, alpha-beta domain"/>
    <property type="match status" value="2"/>
</dbReference>
<dbReference type="HAMAP" id="MF_01365_B">
    <property type="entry name" value="Ribosomal_uL6_B"/>
    <property type="match status" value="1"/>
</dbReference>
<dbReference type="InterPro" id="IPR000702">
    <property type="entry name" value="Ribosomal_uL6-like"/>
</dbReference>
<dbReference type="InterPro" id="IPR036789">
    <property type="entry name" value="Ribosomal_uL6-like_a/b-dom_sf"/>
</dbReference>
<dbReference type="InterPro" id="IPR020040">
    <property type="entry name" value="Ribosomal_uL6_a/b-dom"/>
</dbReference>
<dbReference type="InterPro" id="IPR019906">
    <property type="entry name" value="Ribosomal_uL6_bac-type"/>
</dbReference>
<dbReference type="InterPro" id="IPR002358">
    <property type="entry name" value="Ribosomal_uL6_CS"/>
</dbReference>
<dbReference type="NCBIfam" id="TIGR03654">
    <property type="entry name" value="L6_bact"/>
    <property type="match status" value="1"/>
</dbReference>
<dbReference type="PANTHER" id="PTHR11655">
    <property type="entry name" value="60S/50S RIBOSOMAL PROTEIN L6/L9"/>
    <property type="match status" value="1"/>
</dbReference>
<dbReference type="PANTHER" id="PTHR11655:SF14">
    <property type="entry name" value="LARGE RIBOSOMAL SUBUNIT PROTEIN UL6M"/>
    <property type="match status" value="1"/>
</dbReference>
<dbReference type="Pfam" id="PF00347">
    <property type="entry name" value="Ribosomal_L6"/>
    <property type="match status" value="2"/>
</dbReference>
<dbReference type="PIRSF" id="PIRSF002162">
    <property type="entry name" value="Ribosomal_L6"/>
    <property type="match status" value="1"/>
</dbReference>
<dbReference type="PRINTS" id="PR00059">
    <property type="entry name" value="RIBOSOMALL6"/>
</dbReference>
<dbReference type="SUPFAM" id="SSF56053">
    <property type="entry name" value="Ribosomal protein L6"/>
    <property type="match status" value="2"/>
</dbReference>
<dbReference type="PROSITE" id="PS00525">
    <property type="entry name" value="RIBOSOMAL_L6_1"/>
    <property type="match status" value="1"/>
</dbReference>
<feature type="chain" id="PRO_0000265225" description="Large ribosomal subunit protein uL6">
    <location>
        <begin position="1"/>
        <end position="180"/>
    </location>
</feature>
<protein>
    <recommendedName>
        <fullName evidence="1">Large ribosomal subunit protein uL6</fullName>
    </recommendedName>
    <alternativeName>
        <fullName evidence="2">50S ribosomal protein L6</fullName>
    </alternativeName>
</protein>
<gene>
    <name evidence="1" type="primary">rplF</name>
    <name type="ordered locus">BG0505</name>
</gene>
<accession>Q661C7</accession>